<gene>
    <name evidence="1" type="primary">groES</name>
    <name evidence="1" type="synonym">groS</name>
    <name type="ordered locus">Sbal223_0667</name>
</gene>
<proteinExistence type="inferred from homology"/>
<feature type="chain" id="PRO_1000146915" description="Co-chaperonin GroES">
    <location>
        <begin position="1"/>
        <end position="96"/>
    </location>
</feature>
<accession>B8E9H2</accession>
<protein>
    <recommendedName>
        <fullName evidence="1">Co-chaperonin GroES</fullName>
    </recommendedName>
    <alternativeName>
        <fullName evidence="1">10 kDa chaperonin</fullName>
    </alternativeName>
    <alternativeName>
        <fullName evidence="1">Chaperonin-10</fullName>
        <shortName evidence="1">Cpn10</shortName>
    </alternativeName>
</protein>
<reference key="1">
    <citation type="submission" date="2008-12" db="EMBL/GenBank/DDBJ databases">
        <title>Complete sequence of chromosome of Shewanella baltica OS223.</title>
        <authorList>
            <consortium name="US DOE Joint Genome Institute"/>
            <person name="Lucas S."/>
            <person name="Copeland A."/>
            <person name="Lapidus A."/>
            <person name="Glavina del Rio T."/>
            <person name="Dalin E."/>
            <person name="Tice H."/>
            <person name="Bruce D."/>
            <person name="Goodwin L."/>
            <person name="Pitluck S."/>
            <person name="Chertkov O."/>
            <person name="Meincke L."/>
            <person name="Brettin T."/>
            <person name="Detter J.C."/>
            <person name="Han C."/>
            <person name="Kuske C.R."/>
            <person name="Larimer F."/>
            <person name="Land M."/>
            <person name="Hauser L."/>
            <person name="Kyrpides N."/>
            <person name="Ovchinnikova G."/>
            <person name="Brettar I."/>
            <person name="Rodrigues J."/>
            <person name="Konstantinidis K."/>
            <person name="Tiedje J."/>
        </authorList>
    </citation>
    <scope>NUCLEOTIDE SEQUENCE [LARGE SCALE GENOMIC DNA]</scope>
    <source>
        <strain>OS223</strain>
    </source>
</reference>
<dbReference type="EMBL" id="CP001252">
    <property type="protein sequence ID" value="ACK45187.1"/>
    <property type="molecule type" value="Genomic_DNA"/>
</dbReference>
<dbReference type="RefSeq" id="WP_006086113.1">
    <property type="nucleotide sequence ID" value="NC_011663.1"/>
</dbReference>
<dbReference type="SMR" id="B8E9H2"/>
<dbReference type="KEGG" id="sbp:Sbal223_0667"/>
<dbReference type="HOGENOM" id="CLU_132825_1_1_6"/>
<dbReference type="Proteomes" id="UP000002507">
    <property type="component" value="Chromosome"/>
</dbReference>
<dbReference type="GO" id="GO:0005737">
    <property type="term" value="C:cytoplasm"/>
    <property type="evidence" value="ECO:0007669"/>
    <property type="project" value="UniProtKB-SubCell"/>
</dbReference>
<dbReference type="GO" id="GO:0005524">
    <property type="term" value="F:ATP binding"/>
    <property type="evidence" value="ECO:0007669"/>
    <property type="project" value="InterPro"/>
</dbReference>
<dbReference type="GO" id="GO:0046872">
    <property type="term" value="F:metal ion binding"/>
    <property type="evidence" value="ECO:0007669"/>
    <property type="project" value="TreeGrafter"/>
</dbReference>
<dbReference type="GO" id="GO:0044183">
    <property type="term" value="F:protein folding chaperone"/>
    <property type="evidence" value="ECO:0007669"/>
    <property type="project" value="InterPro"/>
</dbReference>
<dbReference type="GO" id="GO:0051087">
    <property type="term" value="F:protein-folding chaperone binding"/>
    <property type="evidence" value="ECO:0007669"/>
    <property type="project" value="TreeGrafter"/>
</dbReference>
<dbReference type="GO" id="GO:0051082">
    <property type="term" value="F:unfolded protein binding"/>
    <property type="evidence" value="ECO:0007669"/>
    <property type="project" value="TreeGrafter"/>
</dbReference>
<dbReference type="GO" id="GO:0051085">
    <property type="term" value="P:chaperone cofactor-dependent protein refolding"/>
    <property type="evidence" value="ECO:0007669"/>
    <property type="project" value="TreeGrafter"/>
</dbReference>
<dbReference type="CDD" id="cd00320">
    <property type="entry name" value="cpn10"/>
    <property type="match status" value="1"/>
</dbReference>
<dbReference type="FunFam" id="2.30.33.40:FF:000001">
    <property type="entry name" value="10 kDa chaperonin"/>
    <property type="match status" value="1"/>
</dbReference>
<dbReference type="Gene3D" id="2.30.33.40">
    <property type="entry name" value="GroES chaperonin"/>
    <property type="match status" value="1"/>
</dbReference>
<dbReference type="HAMAP" id="MF_00580">
    <property type="entry name" value="CH10"/>
    <property type="match status" value="1"/>
</dbReference>
<dbReference type="InterPro" id="IPR020818">
    <property type="entry name" value="Chaperonin_GroES"/>
</dbReference>
<dbReference type="InterPro" id="IPR037124">
    <property type="entry name" value="Chaperonin_GroES_sf"/>
</dbReference>
<dbReference type="InterPro" id="IPR018369">
    <property type="entry name" value="Chaprnonin_Cpn10_CS"/>
</dbReference>
<dbReference type="InterPro" id="IPR011032">
    <property type="entry name" value="GroES-like_sf"/>
</dbReference>
<dbReference type="NCBIfam" id="NF001526">
    <property type="entry name" value="PRK00364.1-1"/>
    <property type="match status" value="1"/>
</dbReference>
<dbReference type="NCBIfam" id="NF001527">
    <property type="entry name" value="PRK00364.1-2"/>
    <property type="match status" value="1"/>
</dbReference>
<dbReference type="NCBIfam" id="NF001531">
    <property type="entry name" value="PRK00364.2-2"/>
    <property type="match status" value="1"/>
</dbReference>
<dbReference type="PANTHER" id="PTHR10772">
    <property type="entry name" value="10 KDA HEAT SHOCK PROTEIN"/>
    <property type="match status" value="1"/>
</dbReference>
<dbReference type="PANTHER" id="PTHR10772:SF58">
    <property type="entry name" value="CO-CHAPERONIN GROES"/>
    <property type="match status" value="1"/>
</dbReference>
<dbReference type="Pfam" id="PF00166">
    <property type="entry name" value="Cpn10"/>
    <property type="match status" value="1"/>
</dbReference>
<dbReference type="PRINTS" id="PR00297">
    <property type="entry name" value="CHAPERONIN10"/>
</dbReference>
<dbReference type="SMART" id="SM00883">
    <property type="entry name" value="Cpn10"/>
    <property type="match status" value="1"/>
</dbReference>
<dbReference type="SUPFAM" id="SSF50129">
    <property type="entry name" value="GroES-like"/>
    <property type="match status" value="1"/>
</dbReference>
<dbReference type="PROSITE" id="PS00681">
    <property type="entry name" value="CHAPERONINS_CPN10"/>
    <property type="match status" value="1"/>
</dbReference>
<organism>
    <name type="scientific">Shewanella baltica (strain OS223)</name>
    <dbReference type="NCBI Taxonomy" id="407976"/>
    <lineage>
        <taxon>Bacteria</taxon>
        <taxon>Pseudomonadati</taxon>
        <taxon>Pseudomonadota</taxon>
        <taxon>Gammaproteobacteria</taxon>
        <taxon>Alteromonadales</taxon>
        <taxon>Shewanellaceae</taxon>
        <taxon>Shewanella</taxon>
    </lineage>
</organism>
<evidence type="ECO:0000255" key="1">
    <source>
        <dbReference type="HAMAP-Rule" id="MF_00580"/>
    </source>
</evidence>
<keyword id="KW-0143">Chaperone</keyword>
<keyword id="KW-0963">Cytoplasm</keyword>
<name>CH10_SHEB2</name>
<comment type="function">
    <text evidence="1">Together with the chaperonin GroEL, plays an essential role in assisting protein folding. The GroEL-GroES system forms a nano-cage that allows encapsulation of the non-native substrate proteins and provides a physical environment optimized to promote and accelerate protein folding. GroES binds to the apical surface of the GroEL ring, thereby capping the opening of the GroEL channel.</text>
</comment>
<comment type="subunit">
    <text evidence="1">Heptamer of 7 subunits arranged in a ring. Interacts with the chaperonin GroEL.</text>
</comment>
<comment type="subcellular location">
    <subcellularLocation>
        <location evidence="1">Cytoplasm</location>
    </subcellularLocation>
</comment>
<comment type="similarity">
    <text evidence="1">Belongs to the GroES chaperonin family.</text>
</comment>
<sequence length="96" mass="10185">MNIRPLHDRVIVKRLEVESTSAGGIVLTGSAAEKSTRGEILAVGNGRILENGTVKPLDVKVGDVVIFNEGYGVKKEKIDGQEVLILSEADLMAVVG</sequence>